<proteinExistence type="evidence at protein level"/>
<organismHost>
    <name type="scientific">Glycine max</name>
    <name type="common">Soybean</name>
    <name type="synonym">Glycine hispida</name>
    <dbReference type="NCBI Taxonomy" id="3847"/>
</organismHost>
<evidence type="ECO:0000250" key="1"/>
<evidence type="ECO:0000250" key="2">
    <source>
        <dbReference type="UniProtKB" id="P04517"/>
    </source>
</evidence>
<evidence type="ECO:0000250" key="3">
    <source>
        <dbReference type="UniProtKB" id="P0CK11"/>
    </source>
</evidence>
<evidence type="ECO:0000255" key="4"/>
<evidence type="ECO:0000255" key="5">
    <source>
        <dbReference type="PROSITE-ProRule" id="PRU01080"/>
    </source>
</evidence>
<evidence type="ECO:0000255" key="6">
    <source>
        <dbReference type="PROSITE-ProRule" id="PRU01219"/>
    </source>
</evidence>
<evidence type="ECO:0000269" key="7">
    <source>
    </source>
</evidence>
<evidence type="ECO:0000269" key="8">
    <source>
    </source>
</evidence>
<evidence type="ECO:0000305" key="9"/>
<reference key="1">
    <citation type="submission" date="2000-12" db="EMBL/GenBank/DDBJ databases">
        <title>Two genes of soybean mosaic virus are involved in the interaction with the Rsv1 resistance allele of soybean.</title>
        <authorList>
            <person name="Eggenberger A.L."/>
            <person name="Beachy R.N."/>
            <person name="Hill J.H."/>
        </authorList>
    </citation>
    <scope>NUCLEOTIDE SEQUENCE [GENOMIC RNA]</scope>
</reference>
<reference key="2">
    <citation type="journal article" date="2010" name="Virology">
        <title>Mutational analysis of the putative pipo of soybean mosaic virus suggests disruption of PIPO protein impedes movement.</title>
        <authorList>
            <person name="Wen R.H."/>
            <person name="Hajimorad M.R."/>
        </authorList>
    </citation>
    <scope>FUNCTION</scope>
</reference>
<reference key="3">
    <citation type="journal article" date="2021" name="PLoS ONE">
        <title>Analysis of proteolytic processing sites in potyvirus polyproteins revealed differential amino acid preferences of NIa-Pro protease in each of seven cleavage sites.</title>
        <authorList>
            <person name="Goh C.J."/>
            <person name="Hahn Y."/>
        </authorList>
    </citation>
    <scope>PROTEOLYTIC CLEAVAGE (P3N-PIPO POLYPROTEIN)</scope>
</reference>
<feature type="chain" id="PRO_0000420090" description="P3N-PIPO polyprotein">
    <location>
        <begin position="1"/>
        <end position="992"/>
    </location>
</feature>
<feature type="chain" id="PRO_0000420110" description="P1 protease" evidence="4">
    <location>
        <begin position="1"/>
        <end position="308"/>
    </location>
</feature>
<feature type="chain" id="PRO_0000420091" description="Helper component proteinase" evidence="4">
    <location>
        <begin position="309"/>
        <end position="765"/>
    </location>
</feature>
<feature type="chain" id="PRO_0000408552" description="Movement protein P3N-PIPO">
    <location>
        <begin position="766"/>
        <end position="992"/>
    </location>
</feature>
<feature type="domain" description="Peptidase S30" evidence="6">
    <location>
        <begin position="168"/>
        <end position="308"/>
    </location>
</feature>
<feature type="domain" description="Peptidase C6" evidence="5">
    <location>
        <begin position="643"/>
        <end position="765"/>
    </location>
</feature>
<feature type="short sequence motif" description="Involved in interaction with stylet and aphid transmission" evidence="1">
    <location>
        <begin position="361"/>
        <end position="364"/>
    </location>
</feature>
<feature type="short sequence motif" description="Involved in virions binding and aphid transmission" evidence="1">
    <location>
        <begin position="617"/>
        <end position="619"/>
    </location>
</feature>
<feature type="active site" description="For P1 proteinase activity" evidence="6">
    <location>
        <position position="221"/>
    </location>
</feature>
<feature type="active site" description="For P1 proteinase activity" evidence="6">
    <location>
        <position position="230"/>
    </location>
</feature>
<feature type="active site" description="For P1 proteinase activity" evidence="6">
    <location>
        <position position="262"/>
    </location>
</feature>
<feature type="active site" description="For helper component proteinase activity" evidence="5">
    <location>
        <position position="651"/>
    </location>
</feature>
<feature type="active site" description="For helper component proteinase activity" evidence="5">
    <location>
        <position position="724"/>
    </location>
</feature>
<feature type="site" description="Cleavage; by P1 proteinase" evidence="6">
    <location>
        <begin position="308"/>
        <end position="309"/>
    </location>
</feature>
<feature type="site" description="Cleavage; by autolysis" evidence="5">
    <location>
        <begin position="765"/>
        <end position="766"/>
    </location>
</feature>
<feature type="unsure residue">
    <location>
        <begin position="916"/>
        <end position="922"/>
    </location>
</feature>
<protein>
    <recommendedName>
        <fullName>P3N-PIPO polyprotein</fullName>
    </recommendedName>
    <component>
        <recommendedName>
            <fullName>P1 protease</fullName>
            <ecNumber>3.4.21.-</ecNumber>
        </recommendedName>
        <alternativeName>
            <fullName>N-terminal protein</fullName>
        </alternativeName>
        <alternativeName>
            <fullName>P1 proteinase</fullName>
        </alternativeName>
    </component>
    <component>
        <recommendedName>
            <fullName>Helper component proteinase</fullName>
            <shortName>HC-pro</shortName>
            <ecNumber>3.4.22.45</ecNumber>
        </recommendedName>
    </component>
    <component>
        <recommendedName>
            <fullName>Movement protein P3N-PIPO</fullName>
        </recommendedName>
        <alternativeName>
            <fullName>Pretty interesting potyviridae ORF</fullName>
            <shortName>PIPO</shortName>
        </alternativeName>
    </component>
</protein>
<sequence>MATIMIGSMAISVPNTHVSCASNSVMPVQAVQMAKQVPSARGVLYTLKREGSTQVHKHEEALRKFQEAFDQDVGIQRRLLVNKHSSIQSTKKNGLTLRRLTLEQARAKEAAIARRKQEEEDFLNGKYEQQFYAGVSATKSMKFEGGSVGFRTKYWRPTPKKTKERRATSQCRKPTYVLEEVLSIASKSGKLVEFITGKGKRVKVCYVRKHGAILPKFSLPHEEGKYIHQELQYASTYEFLPYICMFAKYKSINADDITYGDSGLLFDERSSLTTNHTKLPYFVVRGRRNGKLVNALEVVENMEDIQHYSQNPEAQFFRGWKKVFDKMPPHVENHECTTDFTNEQCGELAAAISQSIFPVKKLSCKQCRQHIKHLSWEEYKQFLLAHMGCHGPEWETFQEIDGMRYVKRVIETSTAENASLQTSLEIVRLTQNYKSTHMLQIQDINKALMKGPSVTQSELEQASKQLLAMTQWWKNHMTLTDEDALKVFRNKRSSKALLNPSLLCDNQLDKNGNFVWGERGRHSKRFFANYFEEVVPSEGYSKYVIRKNPNGQRELAIGSLIVPLDFERARMALQGKSVTREPITMSCISRQDGNFVYPCCCVTHDDGKAFYSELRSPTKRHLVIGTSGDPKYIDLPATDADRMYIAKEGFCYLNIFLAMLVNVNEDEAKDFTKMVRDVIVPRLGKWPTMLDVATAAYMLTVFHPETRNAELPRILVDHACQTMHVIDSFGSLTVGYHVLKAGTVNQLIQFASNDLQSEMKFYRVGGEVQQRMKCETALITSIFKPKRMIQILENDPYILLMGLVSPSILIHMYRMKHFEKGVELWISKEHSVAKIFIILEQLTKRVAANDVLLEQLEMISETSERFMSILEDCPQAPHSYKTAKDLLTMYIERKASNNQLVENGFVDMNDKLYMAYEKNLLRSLEAGMARIKLVGKIFYNMAIEKICSTYGEMFDKESCRRKQRIFRKLCECVLHECPVTPKKCKKYTFPKM</sequence>
<keyword id="KW-1031">Host cell junction</keyword>
<keyword id="KW-0945">Host-virus interaction</keyword>
<keyword id="KW-0378">Hydrolase</keyword>
<keyword id="KW-1090">Inhibition of host innate immune response by virus</keyword>
<keyword id="KW-0645">Protease</keyword>
<keyword id="KW-1185">Reference proteome</keyword>
<keyword id="KW-0688">Ribosomal frameshifting</keyword>
<keyword id="KW-0720">Serine protease</keyword>
<keyword id="KW-0941">Suppressor of RNA silencing</keyword>
<keyword id="KW-0813">Transport</keyword>
<keyword id="KW-0899">Viral immunoevasion</keyword>
<keyword id="KW-0916">Viral movement protein</keyword>
<organism>
    <name type="scientific">Soybean mosaic virus (strain N)</name>
    <name type="common">SMV</name>
    <dbReference type="NCBI Taxonomy" id="12223"/>
    <lineage>
        <taxon>Viruses</taxon>
        <taxon>Riboviria</taxon>
        <taxon>Orthornavirae</taxon>
        <taxon>Pisuviricota</taxon>
        <taxon>Stelpaviricetes</taxon>
        <taxon>Patatavirales</taxon>
        <taxon>Potyviridae</taxon>
        <taxon>Potyvirus</taxon>
        <taxon>Potyvirus glycitessellati</taxon>
        <taxon>Soybean mosaic virus</taxon>
    </lineage>
</organism>
<accession>P0CK08</accession>
<dbReference type="EC" id="3.4.21.-"/>
<dbReference type="EC" id="3.4.22.45"/>
<dbReference type="EMBL" id="D00507">
    <property type="status" value="NOT_ANNOTATED_CDS"/>
    <property type="molecule type" value="Genomic_RNA"/>
</dbReference>
<dbReference type="SMR" id="P0CK08"/>
<dbReference type="Proteomes" id="UP000007016">
    <property type="component" value="Genome"/>
</dbReference>
<dbReference type="GO" id="GO:0044219">
    <property type="term" value="C:host cell plasmodesma"/>
    <property type="evidence" value="ECO:0007669"/>
    <property type="project" value="UniProtKB-SubCell"/>
</dbReference>
<dbReference type="GO" id="GO:0004197">
    <property type="term" value="F:cysteine-type endopeptidase activity"/>
    <property type="evidence" value="ECO:0007669"/>
    <property type="project" value="InterPro"/>
</dbReference>
<dbReference type="GO" id="GO:0008236">
    <property type="term" value="F:serine-type peptidase activity"/>
    <property type="evidence" value="ECO:0007669"/>
    <property type="project" value="UniProtKB-KW"/>
</dbReference>
<dbReference type="GO" id="GO:0006508">
    <property type="term" value="P:proteolysis"/>
    <property type="evidence" value="ECO:0007669"/>
    <property type="project" value="UniProtKB-KW"/>
</dbReference>
<dbReference type="GO" id="GO:0052170">
    <property type="term" value="P:symbiont-mediated suppression of host innate immune response"/>
    <property type="evidence" value="ECO:0007669"/>
    <property type="project" value="UniProtKB-KW"/>
</dbReference>
<dbReference type="GO" id="GO:0046740">
    <property type="term" value="P:transport of virus in host, cell to cell"/>
    <property type="evidence" value="ECO:0007669"/>
    <property type="project" value="UniProtKB-KW"/>
</dbReference>
<dbReference type="GO" id="GO:0075523">
    <property type="term" value="P:viral translational frameshifting"/>
    <property type="evidence" value="ECO:0007669"/>
    <property type="project" value="UniProtKB-KW"/>
</dbReference>
<dbReference type="Gene3D" id="3.90.70.150">
    <property type="entry name" value="Helper component proteinase"/>
    <property type="match status" value="1"/>
</dbReference>
<dbReference type="InterPro" id="IPR001456">
    <property type="entry name" value="HC-pro"/>
</dbReference>
<dbReference type="InterPro" id="IPR031159">
    <property type="entry name" value="HC_PRO_CPD_dom"/>
</dbReference>
<dbReference type="InterPro" id="IPR042308">
    <property type="entry name" value="HC_PRO_CPD_sf"/>
</dbReference>
<dbReference type="InterPro" id="IPR002540">
    <property type="entry name" value="Pept_S30_P1_potyvir"/>
</dbReference>
<dbReference type="InterPro" id="IPR039560">
    <property type="entry name" value="Potyvirid-P3"/>
</dbReference>
<dbReference type="Pfam" id="PF00851">
    <property type="entry name" value="Peptidase_C6"/>
    <property type="match status" value="1"/>
</dbReference>
<dbReference type="Pfam" id="PF01577">
    <property type="entry name" value="Peptidase_S30"/>
    <property type="match status" value="1"/>
</dbReference>
<dbReference type="Pfam" id="PF13608">
    <property type="entry name" value="Potyvirid-P3"/>
    <property type="match status" value="1"/>
</dbReference>
<dbReference type="PROSITE" id="PS51744">
    <property type="entry name" value="HC_PRO_CPD"/>
    <property type="match status" value="1"/>
</dbReference>
<dbReference type="PROSITE" id="PS51871">
    <property type="entry name" value="PV_P1_PRO"/>
    <property type="match status" value="1"/>
</dbReference>
<comment type="function">
    <molecule>Helper component proteinase</molecule>
    <text evidence="2">Required for aphid transmission and also has proteolytic activity. Only cleaves a Gly-Gly dipeptide at its own C-terminus. Interacts with virions and aphid stylets. Acts as a suppressor of RNA-mediated gene silencing, also known as post-transcriptional gene silencing (PTGS), a mechanism of plant viral defense that limits the accumulation of viral RNAs. May have RNA-binding activity.</text>
</comment>
<comment type="function">
    <molecule>Movement protein P3N-PIPO</molecule>
    <text evidence="7">Allows efficient cell to cell propagation, by bypassing the host cell wall barrier. Transports viral genome to neighboring plant cells directly through plasmosdesmata, without any budding.</text>
</comment>
<comment type="catalytic activity">
    <molecule>Helper component proteinase</molecule>
    <reaction>
        <text>Hydrolyzes a Gly-|-Gly bond at its own C-terminus, commonly in the sequence -Tyr-Xaa-Val-Gly-|-Gly, in the processing of the potyviral polyprotein.</text>
        <dbReference type="EC" id="3.4.22.45"/>
    </reaction>
</comment>
<comment type="subunit">
    <molecule>Movement protein P3N-PIPO</molecule>
    <text evidence="3">Interacts (via PIPO domain) with host PCaP1 protein; this interaction may help to anchor the movement complex to the plasma membrane from which the complex could move to the plasmodesmata.</text>
</comment>
<comment type="subcellular location">
    <molecule>Movement protein P3N-PIPO</molecule>
    <subcellularLocation>
        <location evidence="3">Host cell junction</location>
        <location evidence="3">Host plasmodesma</location>
    </subcellularLocation>
</comment>
<comment type="alternative products">
    <event type="ribosomal frameshifting"/>
    <isoform>
        <id>P0CK08-1</id>
        <name>P3N-PIPO polyprotein</name>
        <sequence type="displayed"/>
    </isoform>
    <isoform>
        <id>P21231-1</id>
        <name>Genome polyprotein</name>
        <sequence type="external"/>
    </isoform>
</comment>
<comment type="domain">
    <molecule>Helper component proteinase</molecule>
    <text evidence="1">The N-terminus of helper component proteinase is involved in interaction with stylets. The central part is involved in interaction with virions and the C-terminus is involved in cell-to cell movement of the virus (By similarity).</text>
</comment>
<comment type="PTM">
    <text evidence="8">Potyviral RNA is expressed as two polyproteins which undergo post-translational proteolytic processing. Genome polyprotein is processed by NIa-pro, P1 and HC-pro proteinases resulting in the production of at least ten individual proteins. P3N-PIPO is cleaved by P1 and HC-pro proteinases resulting in the production of three individual proteins. The P1 proteinase and the HC-pro cleave only their respective C-termini autocatalytically.</text>
</comment>
<comment type="miscellaneous">
    <molecule>Isoform P3N-PIPO polyprotein</molecule>
    <text>Produced by -1 ribosomal frameshifting in P3 ORF.</text>
</comment>
<comment type="similarity">
    <text evidence="9">Belongs to the potyviridae P3N-PIPO polyprotein family.</text>
</comment>
<name>MVP_SBMVN</name>